<feature type="chain" id="PRO_0000346016" description="Protoheme IX farnesyltransferase">
    <location>
        <begin position="1"/>
        <end position="304"/>
    </location>
</feature>
<feature type="transmembrane region" description="Helical" evidence="1">
    <location>
        <begin position="32"/>
        <end position="52"/>
    </location>
</feature>
<feature type="transmembrane region" description="Helical" evidence="1">
    <location>
        <begin position="54"/>
        <end position="74"/>
    </location>
</feature>
<feature type="transmembrane region" description="Helical" evidence="1">
    <location>
        <begin position="104"/>
        <end position="124"/>
    </location>
</feature>
<feature type="transmembrane region" description="Helical" evidence="1">
    <location>
        <begin position="126"/>
        <end position="146"/>
    </location>
</feature>
<feature type="transmembrane region" description="Helical" evidence="1">
    <location>
        <begin position="154"/>
        <end position="174"/>
    </location>
</feature>
<feature type="transmembrane region" description="Helical" evidence="1">
    <location>
        <begin position="180"/>
        <end position="200"/>
    </location>
</feature>
<feature type="transmembrane region" description="Helical" evidence="1">
    <location>
        <begin position="226"/>
        <end position="246"/>
    </location>
</feature>
<feature type="transmembrane region" description="Helical" evidence="1">
    <location>
        <begin position="247"/>
        <end position="267"/>
    </location>
</feature>
<feature type="transmembrane region" description="Helical" evidence="1">
    <location>
        <begin position="284"/>
        <end position="304"/>
    </location>
</feature>
<protein>
    <recommendedName>
        <fullName evidence="1">Protoheme IX farnesyltransferase</fullName>
        <ecNumber evidence="1">2.5.1.141</ecNumber>
    </recommendedName>
    <alternativeName>
        <fullName evidence="1">Heme B farnesyltransferase</fullName>
    </alternativeName>
    <alternativeName>
        <fullName evidence="1">Heme O synthase</fullName>
    </alternativeName>
</protein>
<comment type="function">
    <text evidence="1">Converts heme B (protoheme IX) to heme O by substitution of the vinyl group on carbon 2 of heme B porphyrin ring with a hydroxyethyl farnesyl side group.</text>
</comment>
<comment type="catalytic activity">
    <reaction evidence="1">
        <text>heme b + (2E,6E)-farnesyl diphosphate + H2O = Fe(II)-heme o + diphosphate</text>
        <dbReference type="Rhea" id="RHEA:28070"/>
        <dbReference type="ChEBI" id="CHEBI:15377"/>
        <dbReference type="ChEBI" id="CHEBI:33019"/>
        <dbReference type="ChEBI" id="CHEBI:60344"/>
        <dbReference type="ChEBI" id="CHEBI:60530"/>
        <dbReference type="ChEBI" id="CHEBI:175763"/>
        <dbReference type="EC" id="2.5.1.141"/>
    </reaction>
</comment>
<comment type="pathway">
    <text evidence="1">Porphyrin-containing compound metabolism; heme O biosynthesis; heme O from protoheme: step 1/1.</text>
</comment>
<comment type="subcellular location">
    <subcellularLocation>
        <location evidence="1">Cell inner membrane</location>
        <topology evidence="1">Multi-pass membrane protein</topology>
    </subcellularLocation>
</comment>
<comment type="miscellaneous">
    <text evidence="1">Carbon 2 of the heme B porphyrin ring is defined according to the Fischer nomenclature.</text>
</comment>
<comment type="similarity">
    <text evidence="1">Belongs to the UbiA prenyltransferase family. Protoheme IX farnesyltransferase subfamily.</text>
</comment>
<keyword id="KW-0997">Cell inner membrane</keyword>
<keyword id="KW-1003">Cell membrane</keyword>
<keyword id="KW-0350">Heme biosynthesis</keyword>
<keyword id="KW-0472">Membrane</keyword>
<keyword id="KW-1185">Reference proteome</keyword>
<keyword id="KW-0808">Transferase</keyword>
<keyword id="KW-0812">Transmembrane</keyword>
<keyword id="KW-1133">Transmembrane helix</keyword>
<accession>A8FPN0</accession>
<name>CYOE_SHESH</name>
<proteinExistence type="inferred from homology"/>
<evidence type="ECO:0000255" key="1">
    <source>
        <dbReference type="HAMAP-Rule" id="MF_00154"/>
    </source>
</evidence>
<gene>
    <name evidence="1" type="primary">cyoE</name>
    <name type="ordered locus">Ssed_0190</name>
</gene>
<organism>
    <name type="scientific">Shewanella sediminis (strain HAW-EB3)</name>
    <dbReference type="NCBI Taxonomy" id="425104"/>
    <lineage>
        <taxon>Bacteria</taxon>
        <taxon>Pseudomonadati</taxon>
        <taxon>Pseudomonadota</taxon>
        <taxon>Gammaproteobacteria</taxon>
        <taxon>Alteromonadales</taxon>
        <taxon>Shewanellaceae</taxon>
        <taxon>Shewanella</taxon>
    </lineage>
</organism>
<dbReference type="EC" id="2.5.1.141" evidence="1"/>
<dbReference type="EMBL" id="CP000821">
    <property type="protein sequence ID" value="ABV34803.1"/>
    <property type="molecule type" value="Genomic_DNA"/>
</dbReference>
<dbReference type="RefSeq" id="WP_012004329.1">
    <property type="nucleotide sequence ID" value="NC_009831.1"/>
</dbReference>
<dbReference type="SMR" id="A8FPN0"/>
<dbReference type="STRING" id="425104.Ssed_0190"/>
<dbReference type="KEGG" id="sse:Ssed_0190"/>
<dbReference type="eggNOG" id="COG0109">
    <property type="taxonomic scope" value="Bacteria"/>
</dbReference>
<dbReference type="HOGENOM" id="CLU_029631_0_2_6"/>
<dbReference type="OrthoDB" id="9814417at2"/>
<dbReference type="UniPathway" id="UPA00834">
    <property type="reaction ID" value="UER00712"/>
</dbReference>
<dbReference type="Proteomes" id="UP000002015">
    <property type="component" value="Chromosome"/>
</dbReference>
<dbReference type="GO" id="GO:0005886">
    <property type="term" value="C:plasma membrane"/>
    <property type="evidence" value="ECO:0007669"/>
    <property type="project" value="UniProtKB-SubCell"/>
</dbReference>
<dbReference type="GO" id="GO:0008495">
    <property type="term" value="F:protoheme IX farnesyltransferase activity"/>
    <property type="evidence" value="ECO:0007669"/>
    <property type="project" value="UniProtKB-UniRule"/>
</dbReference>
<dbReference type="GO" id="GO:0048034">
    <property type="term" value="P:heme O biosynthetic process"/>
    <property type="evidence" value="ECO:0007669"/>
    <property type="project" value="UniProtKB-UniRule"/>
</dbReference>
<dbReference type="CDD" id="cd13957">
    <property type="entry name" value="PT_UbiA_Cox10"/>
    <property type="match status" value="1"/>
</dbReference>
<dbReference type="FunFam" id="1.10.357.140:FF:000001">
    <property type="entry name" value="Protoheme IX farnesyltransferase"/>
    <property type="match status" value="1"/>
</dbReference>
<dbReference type="Gene3D" id="1.10.357.140">
    <property type="entry name" value="UbiA prenyltransferase"/>
    <property type="match status" value="1"/>
</dbReference>
<dbReference type="HAMAP" id="MF_00154">
    <property type="entry name" value="CyoE_CtaB"/>
    <property type="match status" value="1"/>
</dbReference>
<dbReference type="InterPro" id="IPR006369">
    <property type="entry name" value="Protohaem_IX_farnesylTrfase"/>
</dbReference>
<dbReference type="InterPro" id="IPR000537">
    <property type="entry name" value="UbiA_prenyltransferase"/>
</dbReference>
<dbReference type="InterPro" id="IPR030470">
    <property type="entry name" value="UbiA_prenylTrfase_CS"/>
</dbReference>
<dbReference type="InterPro" id="IPR044878">
    <property type="entry name" value="UbiA_sf"/>
</dbReference>
<dbReference type="NCBIfam" id="TIGR01473">
    <property type="entry name" value="cyoE_ctaB"/>
    <property type="match status" value="1"/>
</dbReference>
<dbReference type="NCBIfam" id="NF003349">
    <property type="entry name" value="PRK04375.1-2"/>
    <property type="match status" value="1"/>
</dbReference>
<dbReference type="PANTHER" id="PTHR43448:SF7">
    <property type="entry name" value="4-HYDROXYBENZOATE SOLANESYLTRANSFERASE"/>
    <property type="match status" value="1"/>
</dbReference>
<dbReference type="PANTHER" id="PTHR43448">
    <property type="entry name" value="PROTOHEME IX FARNESYLTRANSFERASE, MITOCHONDRIAL"/>
    <property type="match status" value="1"/>
</dbReference>
<dbReference type="Pfam" id="PF01040">
    <property type="entry name" value="UbiA"/>
    <property type="match status" value="1"/>
</dbReference>
<dbReference type="PROSITE" id="PS00943">
    <property type="entry name" value="UBIA"/>
    <property type="match status" value="1"/>
</dbReference>
<sequence length="304" mass="33247">MAKQLSIPSATSGSKSHSLAWRPYYEMTKPKVVALMLLTVLVGMCLAVPGSVPLQPLVIGMIGIGMMAGAAAAFNHLIDRKIDGLMARTYNRPLPKGRVSIPKALTFAISLAALGFVLLYTLVNELTAWLTFASLIGYALVYTAYLKRATPQNIVVGGLAGAMPPLLGWTSVTGEFHGHALLLVIIIFAWTPPHFWALAIHRKAEYAKVDIPMLPVTHGTEFTKTCILLYTVLLAIACLLPVLVGMCGPVYLVGSTLLSCGFIYKAWELKFDDKPGLAMQVFRFSIYHLMLLFLVLLVDHYLWV</sequence>
<reference key="1">
    <citation type="submission" date="2007-08" db="EMBL/GenBank/DDBJ databases">
        <title>Complete sequence of Shewanella sediminis HAW-EB3.</title>
        <authorList>
            <consortium name="US DOE Joint Genome Institute"/>
            <person name="Copeland A."/>
            <person name="Lucas S."/>
            <person name="Lapidus A."/>
            <person name="Barry K."/>
            <person name="Glavina del Rio T."/>
            <person name="Dalin E."/>
            <person name="Tice H."/>
            <person name="Pitluck S."/>
            <person name="Chertkov O."/>
            <person name="Brettin T."/>
            <person name="Bruce D."/>
            <person name="Detter J.C."/>
            <person name="Han C."/>
            <person name="Schmutz J."/>
            <person name="Larimer F."/>
            <person name="Land M."/>
            <person name="Hauser L."/>
            <person name="Kyrpides N."/>
            <person name="Kim E."/>
            <person name="Zhao J.-S."/>
            <person name="Richardson P."/>
        </authorList>
    </citation>
    <scope>NUCLEOTIDE SEQUENCE [LARGE SCALE GENOMIC DNA]</scope>
    <source>
        <strain>HAW-EB3</strain>
    </source>
</reference>